<accession>A1S477</accession>
<protein>
    <recommendedName>
        <fullName evidence="2">Purine nucleoside phosphorylase DeoD-type</fullName>
        <shortName evidence="2">PNP</shortName>
        <ecNumber evidence="2">2.4.2.1</ecNumber>
    </recommendedName>
</protein>
<sequence>MATPHINAVEGAFAETVLFPGDPLRAKYIAETFLENVEQVTDVRNMLGFTGTYKGKRISVMGSGMGIPSCSIYATELIKDYGVKNLIRVGTCGAISTDVKVRDVIIGMGACTDSQVNRLRFKGQDFAAIADYSLLSAVVESAKTHGIQTRVGNVFSADLFYTPDPEMFDVMEKMGVLGVEMEAAGLYGVAHEFGARALCVVTVSDHIRTGEKTTSDERQTTFNDMIIMTLDAAINL</sequence>
<reference key="1">
    <citation type="submission" date="2006-12" db="EMBL/GenBank/DDBJ databases">
        <title>Complete sequence of Shewanella amazonensis SB2B.</title>
        <authorList>
            <consortium name="US DOE Joint Genome Institute"/>
            <person name="Copeland A."/>
            <person name="Lucas S."/>
            <person name="Lapidus A."/>
            <person name="Barry K."/>
            <person name="Detter J.C."/>
            <person name="Glavina del Rio T."/>
            <person name="Hammon N."/>
            <person name="Israni S."/>
            <person name="Dalin E."/>
            <person name="Tice H."/>
            <person name="Pitluck S."/>
            <person name="Munk A.C."/>
            <person name="Brettin T."/>
            <person name="Bruce D."/>
            <person name="Han C."/>
            <person name="Tapia R."/>
            <person name="Gilna P."/>
            <person name="Schmutz J."/>
            <person name="Larimer F."/>
            <person name="Land M."/>
            <person name="Hauser L."/>
            <person name="Kyrpides N."/>
            <person name="Mikhailova N."/>
            <person name="Fredrickson J."/>
            <person name="Richardson P."/>
        </authorList>
    </citation>
    <scope>NUCLEOTIDE SEQUENCE [LARGE SCALE GENOMIC DNA]</scope>
    <source>
        <strain>ATCC BAA-1098 / SB2B</strain>
    </source>
</reference>
<keyword id="KW-0328">Glycosyltransferase</keyword>
<keyword id="KW-1185">Reference proteome</keyword>
<keyword id="KW-0808">Transferase</keyword>
<organism>
    <name type="scientific">Shewanella amazonensis (strain ATCC BAA-1098 / SB2B)</name>
    <dbReference type="NCBI Taxonomy" id="326297"/>
    <lineage>
        <taxon>Bacteria</taxon>
        <taxon>Pseudomonadati</taxon>
        <taxon>Pseudomonadota</taxon>
        <taxon>Gammaproteobacteria</taxon>
        <taxon>Alteromonadales</taxon>
        <taxon>Shewanellaceae</taxon>
        <taxon>Shewanella</taxon>
    </lineage>
</organism>
<evidence type="ECO:0000250" key="1">
    <source>
        <dbReference type="UniProtKB" id="P50389"/>
    </source>
</evidence>
<evidence type="ECO:0000255" key="2">
    <source>
        <dbReference type="HAMAP-Rule" id="MF_01627"/>
    </source>
</evidence>
<gene>
    <name evidence="2" type="primary">deoD</name>
    <name type="ordered locus">Sama_0976</name>
</gene>
<name>DEOD_SHEAM</name>
<feature type="chain" id="PRO_1000069640" description="Purine nucleoside phosphorylase DeoD-type">
    <location>
        <begin position="1"/>
        <end position="236"/>
    </location>
</feature>
<feature type="active site" description="Proton donor" evidence="2">
    <location>
        <position position="205"/>
    </location>
</feature>
<feature type="binding site" evidence="1">
    <location>
        <position position="5"/>
    </location>
    <ligand>
        <name>a purine D-ribonucleoside</name>
        <dbReference type="ChEBI" id="CHEBI:142355"/>
        <note>ligand shared between dimeric partners</note>
    </ligand>
</feature>
<feature type="binding site" description="in other chain" evidence="1">
    <location>
        <position position="21"/>
    </location>
    <ligand>
        <name>phosphate</name>
        <dbReference type="ChEBI" id="CHEBI:43474"/>
        <note>ligand shared between dimeric partners</note>
    </ligand>
</feature>
<feature type="binding site" description="in other chain" evidence="1">
    <location>
        <position position="25"/>
    </location>
    <ligand>
        <name>phosphate</name>
        <dbReference type="ChEBI" id="CHEBI:43474"/>
        <note>ligand shared between dimeric partners</note>
    </ligand>
</feature>
<feature type="binding site" evidence="1">
    <location>
        <position position="44"/>
    </location>
    <ligand>
        <name>phosphate</name>
        <dbReference type="ChEBI" id="CHEBI:43474"/>
        <note>ligand shared between dimeric partners</note>
    </ligand>
</feature>
<feature type="binding site" description="in other chain" evidence="1">
    <location>
        <begin position="88"/>
        <end position="91"/>
    </location>
    <ligand>
        <name>phosphate</name>
        <dbReference type="ChEBI" id="CHEBI:43474"/>
        <note>ligand shared between dimeric partners</note>
    </ligand>
</feature>
<feature type="binding site" description="in other chain" evidence="1">
    <location>
        <begin position="180"/>
        <end position="182"/>
    </location>
    <ligand>
        <name>a purine D-ribonucleoside</name>
        <dbReference type="ChEBI" id="CHEBI:142355"/>
        <note>ligand shared between dimeric partners</note>
    </ligand>
</feature>
<feature type="binding site" description="in other chain" evidence="1">
    <location>
        <begin position="204"/>
        <end position="205"/>
    </location>
    <ligand>
        <name>a purine D-ribonucleoside</name>
        <dbReference type="ChEBI" id="CHEBI:142355"/>
        <note>ligand shared between dimeric partners</note>
    </ligand>
</feature>
<feature type="site" description="Important for catalytic activity" evidence="2">
    <location>
        <position position="218"/>
    </location>
</feature>
<proteinExistence type="inferred from homology"/>
<dbReference type="EC" id="2.4.2.1" evidence="2"/>
<dbReference type="EMBL" id="CP000507">
    <property type="protein sequence ID" value="ABL99183.1"/>
    <property type="molecule type" value="Genomic_DNA"/>
</dbReference>
<dbReference type="RefSeq" id="WP_011759092.1">
    <property type="nucleotide sequence ID" value="NC_008700.1"/>
</dbReference>
<dbReference type="SMR" id="A1S477"/>
<dbReference type="STRING" id="326297.Sama_0976"/>
<dbReference type="KEGG" id="saz:Sama_0976"/>
<dbReference type="eggNOG" id="COG0813">
    <property type="taxonomic scope" value="Bacteria"/>
</dbReference>
<dbReference type="HOGENOM" id="CLU_068457_2_0_6"/>
<dbReference type="OrthoDB" id="9782889at2"/>
<dbReference type="Proteomes" id="UP000009175">
    <property type="component" value="Chromosome"/>
</dbReference>
<dbReference type="GO" id="GO:0005829">
    <property type="term" value="C:cytosol"/>
    <property type="evidence" value="ECO:0007669"/>
    <property type="project" value="TreeGrafter"/>
</dbReference>
<dbReference type="GO" id="GO:0004731">
    <property type="term" value="F:purine-nucleoside phosphorylase activity"/>
    <property type="evidence" value="ECO:0007669"/>
    <property type="project" value="UniProtKB-UniRule"/>
</dbReference>
<dbReference type="GO" id="GO:0006152">
    <property type="term" value="P:purine nucleoside catabolic process"/>
    <property type="evidence" value="ECO:0007669"/>
    <property type="project" value="TreeGrafter"/>
</dbReference>
<dbReference type="CDD" id="cd09006">
    <property type="entry name" value="PNP_EcPNPI-like"/>
    <property type="match status" value="1"/>
</dbReference>
<dbReference type="Gene3D" id="3.40.50.1580">
    <property type="entry name" value="Nucleoside phosphorylase domain"/>
    <property type="match status" value="1"/>
</dbReference>
<dbReference type="HAMAP" id="MF_01627">
    <property type="entry name" value="Pur_nucleosid_phosp"/>
    <property type="match status" value="1"/>
</dbReference>
<dbReference type="InterPro" id="IPR004402">
    <property type="entry name" value="DeoD-type"/>
</dbReference>
<dbReference type="InterPro" id="IPR018016">
    <property type="entry name" value="Nucleoside_phosphorylase_CS"/>
</dbReference>
<dbReference type="InterPro" id="IPR000845">
    <property type="entry name" value="Nucleoside_phosphorylase_d"/>
</dbReference>
<dbReference type="InterPro" id="IPR035994">
    <property type="entry name" value="Nucleoside_phosphorylase_sf"/>
</dbReference>
<dbReference type="NCBIfam" id="TIGR00107">
    <property type="entry name" value="deoD"/>
    <property type="match status" value="1"/>
</dbReference>
<dbReference type="NCBIfam" id="NF004489">
    <property type="entry name" value="PRK05819.1"/>
    <property type="match status" value="1"/>
</dbReference>
<dbReference type="NCBIfam" id="NF009914">
    <property type="entry name" value="PRK13374.1"/>
    <property type="match status" value="1"/>
</dbReference>
<dbReference type="PANTHER" id="PTHR43691:SF2">
    <property type="entry name" value="PURINE NUCLEOSIDE PHOSPHORYLASE DEOD-TYPE"/>
    <property type="match status" value="1"/>
</dbReference>
<dbReference type="PANTHER" id="PTHR43691">
    <property type="entry name" value="URIDINE PHOSPHORYLASE"/>
    <property type="match status" value="1"/>
</dbReference>
<dbReference type="Pfam" id="PF01048">
    <property type="entry name" value="PNP_UDP_1"/>
    <property type="match status" value="1"/>
</dbReference>
<dbReference type="SUPFAM" id="SSF53167">
    <property type="entry name" value="Purine and uridine phosphorylases"/>
    <property type="match status" value="1"/>
</dbReference>
<dbReference type="PROSITE" id="PS01232">
    <property type="entry name" value="PNP_UDP_1"/>
    <property type="match status" value="1"/>
</dbReference>
<comment type="function">
    <text evidence="2">Catalyzes the reversible phosphorolytic breakdown of the N-glycosidic bond in the beta-(deoxy)ribonucleoside molecules, with the formation of the corresponding free purine bases and pentose-1-phosphate.</text>
</comment>
<comment type="catalytic activity">
    <reaction evidence="2">
        <text>a purine D-ribonucleoside + phosphate = a purine nucleobase + alpha-D-ribose 1-phosphate</text>
        <dbReference type="Rhea" id="RHEA:19805"/>
        <dbReference type="ChEBI" id="CHEBI:26386"/>
        <dbReference type="ChEBI" id="CHEBI:43474"/>
        <dbReference type="ChEBI" id="CHEBI:57720"/>
        <dbReference type="ChEBI" id="CHEBI:142355"/>
        <dbReference type="EC" id="2.4.2.1"/>
    </reaction>
</comment>
<comment type="catalytic activity">
    <reaction evidence="2">
        <text>a purine 2'-deoxy-D-ribonucleoside + phosphate = a purine nucleobase + 2-deoxy-alpha-D-ribose 1-phosphate</text>
        <dbReference type="Rhea" id="RHEA:36431"/>
        <dbReference type="ChEBI" id="CHEBI:26386"/>
        <dbReference type="ChEBI" id="CHEBI:43474"/>
        <dbReference type="ChEBI" id="CHEBI:57259"/>
        <dbReference type="ChEBI" id="CHEBI:142361"/>
        <dbReference type="EC" id="2.4.2.1"/>
    </reaction>
</comment>
<comment type="subunit">
    <text evidence="2">Homohexamer; trimer of homodimers.</text>
</comment>
<comment type="similarity">
    <text evidence="2">Belongs to the PNP/UDP phosphorylase family.</text>
</comment>